<accession>Q66S54</accession>
<dbReference type="EMBL" id="AY707507">
    <property type="protein sequence ID" value="AAU11296.1"/>
    <property type="molecule type" value="Genomic_DNA"/>
</dbReference>
<dbReference type="EMBL" id="AY707504">
    <property type="protein sequence ID" value="AAU11296.1"/>
    <property type="status" value="JOINED"/>
    <property type="molecule type" value="Genomic_DNA"/>
</dbReference>
<dbReference type="EMBL" id="AY707505">
    <property type="protein sequence ID" value="AAU11296.1"/>
    <property type="status" value="JOINED"/>
    <property type="molecule type" value="Genomic_DNA"/>
</dbReference>
<dbReference type="EMBL" id="AY707506">
    <property type="protein sequence ID" value="AAU11296.1"/>
    <property type="status" value="JOINED"/>
    <property type="molecule type" value="Genomic_DNA"/>
</dbReference>
<dbReference type="SMR" id="Q66S54"/>
<dbReference type="GO" id="GO:0005581">
    <property type="term" value="C:collagen trimer"/>
    <property type="evidence" value="ECO:0007669"/>
    <property type="project" value="UniProtKB-KW"/>
</dbReference>
<dbReference type="GO" id="GO:0005615">
    <property type="term" value="C:extracellular space"/>
    <property type="evidence" value="ECO:0007669"/>
    <property type="project" value="TreeGrafter"/>
</dbReference>
<dbReference type="GO" id="GO:0005771">
    <property type="term" value="C:multivesicular body"/>
    <property type="evidence" value="ECO:0007669"/>
    <property type="project" value="TreeGrafter"/>
</dbReference>
<dbReference type="GO" id="GO:0005537">
    <property type="term" value="F:D-mannose binding"/>
    <property type="evidence" value="ECO:0007669"/>
    <property type="project" value="UniProtKB-KW"/>
</dbReference>
<dbReference type="GO" id="GO:0006958">
    <property type="term" value="P:complement activation, classical pathway"/>
    <property type="evidence" value="ECO:0007669"/>
    <property type="project" value="UniProtKB-KW"/>
</dbReference>
<dbReference type="GO" id="GO:0001867">
    <property type="term" value="P:complement activation, lectin pathway"/>
    <property type="evidence" value="ECO:0007669"/>
    <property type="project" value="UniProtKB-KW"/>
</dbReference>
<dbReference type="CDD" id="cd03591">
    <property type="entry name" value="CLECT_collectin_like"/>
    <property type="match status" value="1"/>
</dbReference>
<dbReference type="FunFam" id="3.10.100.10:FF:000088">
    <property type="entry name" value="Mannose-binding protein A"/>
    <property type="match status" value="1"/>
</dbReference>
<dbReference type="Gene3D" id="3.10.100.10">
    <property type="entry name" value="Mannose-Binding Protein A, subunit A"/>
    <property type="match status" value="1"/>
</dbReference>
<dbReference type="InterPro" id="IPR001304">
    <property type="entry name" value="C-type_lectin-like"/>
</dbReference>
<dbReference type="InterPro" id="IPR016186">
    <property type="entry name" value="C-type_lectin-like/link_sf"/>
</dbReference>
<dbReference type="InterPro" id="IPR018378">
    <property type="entry name" value="C-type_lectin_CS"/>
</dbReference>
<dbReference type="InterPro" id="IPR051077">
    <property type="entry name" value="Ca-dependent_lectin"/>
</dbReference>
<dbReference type="InterPro" id="IPR008160">
    <property type="entry name" value="Collagen"/>
</dbReference>
<dbReference type="InterPro" id="IPR033990">
    <property type="entry name" value="Collectin_CTLD"/>
</dbReference>
<dbReference type="InterPro" id="IPR016187">
    <property type="entry name" value="CTDL_fold"/>
</dbReference>
<dbReference type="PANTHER" id="PTHR24024:SF34">
    <property type="entry name" value="MANNOSE-BINDING PROTEIN C"/>
    <property type="match status" value="1"/>
</dbReference>
<dbReference type="PANTHER" id="PTHR24024">
    <property type="entry name" value="PULMONARY SURFACTANT-ASSOCIATED PROTEIN A"/>
    <property type="match status" value="1"/>
</dbReference>
<dbReference type="Pfam" id="PF01391">
    <property type="entry name" value="Collagen"/>
    <property type="match status" value="1"/>
</dbReference>
<dbReference type="Pfam" id="PF00059">
    <property type="entry name" value="Lectin_C"/>
    <property type="match status" value="1"/>
</dbReference>
<dbReference type="SMART" id="SM00034">
    <property type="entry name" value="CLECT"/>
    <property type="match status" value="1"/>
</dbReference>
<dbReference type="SUPFAM" id="SSF56436">
    <property type="entry name" value="C-type lectin-like"/>
    <property type="match status" value="1"/>
</dbReference>
<dbReference type="SUPFAM" id="SSF57944">
    <property type="entry name" value="Triple coiled coil domain of C-type lectins"/>
    <property type="match status" value="1"/>
</dbReference>
<dbReference type="PROSITE" id="PS00615">
    <property type="entry name" value="C_TYPE_LECTIN_1"/>
    <property type="match status" value="1"/>
</dbReference>
<dbReference type="PROSITE" id="PS50041">
    <property type="entry name" value="C_TYPE_LECTIN_2"/>
    <property type="match status" value="1"/>
</dbReference>
<organism>
    <name type="scientific">Hylobates lar</name>
    <name type="common">Lar gibbon</name>
    <name type="synonym">White-handed gibbon</name>
    <dbReference type="NCBI Taxonomy" id="9580"/>
    <lineage>
        <taxon>Eukaryota</taxon>
        <taxon>Metazoa</taxon>
        <taxon>Chordata</taxon>
        <taxon>Craniata</taxon>
        <taxon>Vertebrata</taxon>
        <taxon>Euteleostomi</taxon>
        <taxon>Mammalia</taxon>
        <taxon>Eutheria</taxon>
        <taxon>Euarchontoglires</taxon>
        <taxon>Primates</taxon>
        <taxon>Haplorrhini</taxon>
        <taxon>Catarrhini</taxon>
        <taxon>Hylobatidae</taxon>
        <taxon>Hylobates</taxon>
    </lineage>
</organism>
<reference key="1">
    <citation type="journal article" date="2004" name="Genes Immun.">
        <title>Evolution of the mannose-binding lectin gene in primates.</title>
        <authorList>
            <person name="Verga Falzacappa M.V."/>
            <person name="Segat L."/>
            <person name="Puppini B."/>
            <person name="Amoroso A."/>
            <person name="Crovella S."/>
        </authorList>
    </citation>
    <scope>NUCLEOTIDE SEQUENCE [GENOMIC DNA]</scope>
</reference>
<sequence length="248" mass="26298">MSLIPSLSLLLMSMVAASYSETVTCEDAQKTCPAVIACSSPGINGFPGKDGRDGTKGEKGEPGQGLRGLQGPPGKLGPPGNPGPSGSPGPKGQKGDPGKSPDCDSSLAVSERKALQTEMARIKKWLTFSLGKQVGNKFFLTNGEMMTFEKVKALCVKFQASVATPRNAAENRAIQNLIKEEAFMGITDEKTEGQFVDLTGNRLTYTNWNEGEPNNAGSDEDCVLLLKNGLWNDVPCSSSHLAVCEFPI</sequence>
<feature type="signal peptide" evidence="1">
    <location>
        <begin position="1"/>
        <end position="20"/>
    </location>
</feature>
<feature type="chain" id="PRO_0000017403" description="Mannose-binding protein C">
    <location>
        <begin position="21"/>
        <end position="248"/>
    </location>
</feature>
<feature type="domain" description="Collagen-like">
    <location>
        <begin position="42"/>
        <end position="99"/>
    </location>
</feature>
<feature type="domain" description="C-type lectin" evidence="2">
    <location>
        <begin position="134"/>
        <end position="245"/>
    </location>
</feature>
<feature type="region of interest" description="Disordered" evidence="3">
    <location>
        <begin position="43"/>
        <end position="107"/>
    </location>
</feature>
<feature type="coiled-coil region" evidence="1">
    <location>
        <begin position="112"/>
        <end position="130"/>
    </location>
</feature>
<feature type="compositionally biased region" description="Basic and acidic residues" evidence="3">
    <location>
        <begin position="49"/>
        <end position="61"/>
    </location>
</feature>
<feature type="compositionally biased region" description="Pro residues" evidence="3">
    <location>
        <begin position="75"/>
        <end position="87"/>
    </location>
</feature>
<feature type="compositionally biased region" description="Basic and acidic residues" evidence="3">
    <location>
        <begin position="93"/>
        <end position="102"/>
    </location>
</feature>
<feature type="modified residue" description="4-hydroxyproline" evidence="1">
    <location>
        <position position="47"/>
    </location>
</feature>
<feature type="modified residue" description="4-hydroxyproline" evidence="1">
    <location>
        <position position="73"/>
    </location>
</feature>
<feature type="modified residue" description="4-hydroxyproline" evidence="1">
    <location>
        <position position="79"/>
    </location>
</feature>
<feature type="modified residue" description="4-hydroxyproline" evidence="1">
    <location>
        <position position="82"/>
    </location>
</feature>
<feature type="modified residue" description="4-hydroxyproline" evidence="1">
    <location>
        <position position="88"/>
    </location>
</feature>
<feature type="disulfide bond" evidence="2">
    <location>
        <begin position="155"/>
        <end position="244"/>
    </location>
</feature>
<feature type="disulfide bond" evidence="2">
    <location>
        <begin position="222"/>
        <end position="236"/>
    </location>
</feature>
<gene>
    <name type="primary">MBL2</name>
</gene>
<keyword id="KW-0106">Calcium</keyword>
<keyword id="KW-0175">Coiled coil</keyword>
<keyword id="KW-0176">Collagen</keyword>
<keyword id="KW-1018">Complement activation lectin pathway</keyword>
<keyword id="KW-0180">Complement pathway</keyword>
<keyword id="KW-1015">Disulfide bond</keyword>
<keyword id="KW-0379">Hydroxylation</keyword>
<keyword id="KW-0391">Immunity</keyword>
<keyword id="KW-0399">Innate immunity</keyword>
<keyword id="KW-0430">Lectin</keyword>
<keyword id="KW-0465">Mannose-binding</keyword>
<keyword id="KW-0677">Repeat</keyword>
<keyword id="KW-0964">Secreted</keyword>
<keyword id="KW-0732">Signal</keyword>
<evidence type="ECO:0000250" key="1"/>
<evidence type="ECO:0000255" key="2">
    <source>
        <dbReference type="PROSITE-ProRule" id="PRU00040"/>
    </source>
</evidence>
<evidence type="ECO:0000256" key="3">
    <source>
        <dbReference type="SAM" id="MobiDB-lite"/>
    </source>
</evidence>
<protein>
    <recommendedName>
        <fullName>Mannose-binding protein C</fullName>
        <shortName>MBP-C</shortName>
    </recommendedName>
    <alternativeName>
        <fullName>MBP1</fullName>
    </alternativeName>
    <alternativeName>
        <fullName>Mannan-binding protein</fullName>
    </alternativeName>
    <alternativeName>
        <fullName>Mannose-binding lectin</fullName>
    </alternativeName>
</protein>
<name>MBL2_HYLLA</name>
<comment type="function">
    <text evidence="1">Calcium-dependent lectin involved in innate immune defense. Binds mannose, fucose and N-acetylglucosamine on different microorganisms and activates the lectin complement pathway. Binds to late apoptotic cells, as well as to apoptotic blebs and to necrotic cells, but not to early apoptotic cells, facilitating their uptake by macrophages (By similarity).</text>
</comment>
<comment type="subunit">
    <text evidence="1">Oligomeric complex of 3 or more homotrimers. Interacts with MASP1 and MASP2 (By similarity). Interacts with MEP1A and MEP1B and may inhibit their catalytic activity (By similarity).</text>
</comment>
<comment type="subcellular location">
    <subcellularLocation>
        <location evidence="1">Secreted</location>
    </subcellularLocation>
</comment>
<comment type="domain">
    <text evidence="1">The coiled-coil domain mediates trimerization.</text>
</comment>
<comment type="PTM">
    <text evidence="1">Hydroxylation on proline residues within the sequence motif, GXPG, is most likely to be 4-hydroxy as this fits the requirement for 4-hydroxylation in vertebrates.</text>
</comment>
<proteinExistence type="inferred from homology"/>